<evidence type="ECO:0000255" key="1">
    <source>
        <dbReference type="HAMAP-Rule" id="MF_00055"/>
    </source>
</evidence>
<accession>Q57846</accession>
<gene>
    <name type="ordered locus">MJ0403</name>
</gene>
<reference key="1">
    <citation type="journal article" date="1996" name="Science">
        <title>Complete genome sequence of the methanogenic archaeon, Methanococcus jannaschii.</title>
        <authorList>
            <person name="Bult C.J."/>
            <person name="White O."/>
            <person name="Olsen G.J."/>
            <person name="Zhou L."/>
            <person name="Fleischmann R.D."/>
            <person name="Sutton G.G."/>
            <person name="Blake J.A."/>
            <person name="FitzGerald L.M."/>
            <person name="Clayton R.A."/>
            <person name="Gocayne J.D."/>
            <person name="Kerlavage A.R."/>
            <person name="Dougherty B.A."/>
            <person name="Tomb J.-F."/>
            <person name="Adams M.D."/>
            <person name="Reich C.I."/>
            <person name="Overbeek R."/>
            <person name="Kirkness E.F."/>
            <person name="Weinstock K.G."/>
            <person name="Merrick J.M."/>
            <person name="Glodek A."/>
            <person name="Scott J.L."/>
            <person name="Geoghagen N.S.M."/>
            <person name="Weidman J.F."/>
            <person name="Fuhrmann J.L."/>
            <person name="Nguyen D."/>
            <person name="Utterback T.R."/>
            <person name="Kelley J.M."/>
            <person name="Peterson J.D."/>
            <person name="Sadow P.W."/>
            <person name="Hanna M.C."/>
            <person name="Cotton M.D."/>
            <person name="Roberts K.M."/>
            <person name="Hurst M.A."/>
            <person name="Kaine B.P."/>
            <person name="Borodovsky M."/>
            <person name="Klenk H.-P."/>
            <person name="Fraser C.M."/>
            <person name="Smith H.O."/>
            <person name="Woese C.R."/>
            <person name="Venter J.C."/>
        </authorList>
    </citation>
    <scope>NUCLEOTIDE SEQUENCE [LARGE SCALE GENOMIC DNA]</scope>
    <source>
        <strain>ATCC 43067 / DSM 2661 / JAL-1 / JCM 10045 / NBRC 100440</strain>
    </source>
</reference>
<dbReference type="EMBL" id="L77117">
    <property type="protein sequence ID" value="AAB98390.1"/>
    <property type="molecule type" value="Genomic_DNA"/>
</dbReference>
<dbReference type="PIR" id="C64350">
    <property type="entry name" value="C64350"/>
</dbReference>
<dbReference type="RefSeq" id="WP_010869902.1">
    <property type="nucleotide sequence ID" value="NC_000909.1"/>
</dbReference>
<dbReference type="SMR" id="Q57846"/>
<dbReference type="FunCoup" id="Q57846">
    <property type="interactions" value="111"/>
</dbReference>
<dbReference type="STRING" id="243232.MJ_0403"/>
<dbReference type="PaxDb" id="243232-MJ_0403"/>
<dbReference type="EnsemblBacteria" id="AAB98390">
    <property type="protein sequence ID" value="AAB98390"/>
    <property type="gene ID" value="MJ_0403"/>
</dbReference>
<dbReference type="GeneID" id="1451263"/>
<dbReference type="KEGG" id="mja:MJ_0403"/>
<dbReference type="eggNOG" id="arCOG01728">
    <property type="taxonomic scope" value="Archaea"/>
</dbReference>
<dbReference type="HOGENOM" id="CLU_038085_2_0_2"/>
<dbReference type="InParanoid" id="Q57846"/>
<dbReference type="OrthoDB" id="372162at2157"/>
<dbReference type="PhylomeDB" id="Q57846"/>
<dbReference type="Proteomes" id="UP000000805">
    <property type="component" value="Chromosome"/>
</dbReference>
<dbReference type="CDD" id="cd07361">
    <property type="entry name" value="MEMO_like"/>
    <property type="match status" value="1"/>
</dbReference>
<dbReference type="Gene3D" id="3.40.830.10">
    <property type="entry name" value="LigB-like"/>
    <property type="match status" value="1"/>
</dbReference>
<dbReference type="HAMAP" id="MF_00055">
    <property type="entry name" value="MEMO1"/>
    <property type="match status" value="1"/>
</dbReference>
<dbReference type="InterPro" id="IPR002737">
    <property type="entry name" value="MEMO1_fam"/>
</dbReference>
<dbReference type="NCBIfam" id="TIGR04336">
    <property type="entry name" value="AmmeMemoSam_B"/>
    <property type="match status" value="1"/>
</dbReference>
<dbReference type="NCBIfam" id="NF001987">
    <property type="entry name" value="PRK00782.1"/>
    <property type="match status" value="1"/>
</dbReference>
<dbReference type="PANTHER" id="PTHR11060">
    <property type="entry name" value="PROTEIN MEMO1"/>
    <property type="match status" value="1"/>
</dbReference>
<dbReference type="PANTHER" id="PTHR11060:SF0">
    <property type="entry name" value="PROTEIN MEMO1"/>
    <property type="match status" value="1"/>
</dbReference>
<dbReference type="Pfam" id="PF01875">
    <property type="entry name" value="Memo"/>
    <property type="match status" value="1"/>
</dbReference>
<dbReference type="SUPFAM" id="SSF53213">
    <property type="entry name" value="LigB-like"/>
    <property type="match status" value="1"/>
</dbReference>
<protein>
    <recommendedName>
        <fullName evidence="1">MEMO1 family protein MJ0403</fullName>
    </recommendedName>
</protein>
<sequence length="287" mass="32097">MNKIRYPAVAGLFYPSHPDELIDMIEQCYLHKFGPKSMPVHGTYEKPIGLLCPHAGYVYSGPIQAHSYYELSKRVDALEETTVVILGPNHTGLGSGVSVMDGIWRTPLGDVKCDEEFVEELWRKCEIVDLDETAHLNEHSIEVQLPFLKHLELLNIAKFKIVPICMMFQDYETAVEVGYFIAKIAKELNRRIVVIASSDLTHYEPQEIASKKDAIVIKDILEMNEKELYEDVVNYNISMCGYGPVIAMLKAMKTLGAEKAKLLAYATSGDITGDYSAVVGYASAIVE</sequence>
<proteinExistence type="inferred from homology"/>
<feature type="chain" id="PRO_0000134379" description="MEMO1 family protein MJ0403">
    <location>
        <begin position="1"/>
        <end position="287"/>
    </location>
</feature>
<organism>
    <name type="scientific">Methanocaldococcus jannaschii (strain ATCC 43067 / DSM 2661 / JAL-1 / JCM 10045 / NBRC 100440)</name>
    <name type="common">Methanococcus jannaschii</name>
    <dbReference type="NCBI Taxonomy" id="243232"/>
    <lineage>
        <taxon>Archaea</taxon>
        <taxon>Methanobacteriati</taxon>
        <taxon>Methanobacteriota</taxon>
        <taxon>Methanomada group</taxon>
        <taxon>Methanococci</taxon>
        <taxon>Methanococcales</taxon>
        <taxon>Methanocaldococcaceae</taxon>
        <taxon>Methanocaldococcus</taxon>
    </lineage>
</organism>
<name>Y403_METJA</name>
<comment type="similarity">
    <text evidence="1">Belongs to the MEMO1 family.</text>
</comment>
<keyword id="KW-1185">Reference proteome</keyword>